<gene>
    <name evidence="1" type="primary">htpX</name>
    <name type="ordered locus">Shal_2473</name>
</gene>
<comment type="cofactor">
    <cofactor evidence="1">
        <name>Zn(2+)</name>
        <dbReference type="ChEBI" id="CHEBI:29105"/>
    </cofactor>
    <text evidence="1">Binds 1 zinc ion per subunit.</text>
</comment>
<comment type="subcellular location">
    <subcellularLocation>
        <location evidence="1">Cell inner membrane</location>
        <topology evidence="1">Multi-pass membrane protein</topology>
    </subcellularLocation>
</comment>
<comment type="similarity">
    <text evidence="1">Belongs to the peptidase M48B family.</text>
</comment>
<dbReference type="EC" id="3.4.24.-" evidence="1"/>
<dbReference type="EMBL" id="CP000931">
    <property type="protein sequence ID" value="ABZ77030.1"/>
    <property type="molecule type" value="Genomic_DNA"/>
</dbReference>
<dbReference type="RefSeq" id="WP_012277558.1">
    <property type="nucleotide sequence ID" value="NC_010334.1"/>
</dbReference>
<dbReference type="SMR" id="B0TJN4"/>
<dbReference type="STRING" id="458817.Shal_2473"/>
<dbReference type="MEROPS" id="M48.002"/>
<dbReference type="KEGG" id="shl:Shal_2473"/>
<dbReference type="eggNOG" id="COG0501">
    <property type="taxonomic scope" value="Bacteria"/>
</dbReference>
<dbReference type="HOGENOM" id="CLU_042266_1_0_6"/>
<dbReference type="OrthoDB" id="15218at2"/>
<dbReference type="Proteomes" id="UP000001317">
    <property type="component" value="Chromosome"/>
</dbReference>
<dbReference type="GO" id="GO:0005886">
    <property type="term" value="C:plasma membrane"/>
    <property type="evidence" value="ECO:0007669"/>
    <property type="project" value="UniProtKB-SubCell"/>
</dbReference>
<dbReference type="GO" id="GO:0004222">
    <property type="term" value="F:metalloendopeptidase activity"/>
    <property type="evidence" value="ECO:0007669"/>
    <property type="project" value="UniProtKB-UniRule"/>
</dbReference>
<dbReference type="GO" id="GO:0008270">
    <property type="term" value="F:zinc ion binding"/>
    <property type="evidence" value="ECO:0007669"/>
    <property type="project" value="UniProtKB-UniRule"/>
</dbReference>
<dbReference type="GO" id="GO:0006508">
    <property type="term" value="P:proteolysis"/>
    <property type="evidence" value="ECO:0007669"/>
    <property type="project" value="UniProtKB-KW"/>
</dbReference>
<dbReference type="CDD" id="cd07335">
    <property type="entry name" value="M48B_HtpX_like"/>
    <property type="match status" value="1"/>
</dbReference>
<dbReference type="FunFam" id="3.30.2010.10:FF:000001">
    <property type="entry name" value="Protease HtpX"/>
    <property type="match status" value="1"/>
</dbReference>
<dbReference type="Gene3D" id="3.30.2010.10">
    <property type="entry name" value="Metalloproteases ('zincins'), catalytic domain"/>
    <property type="match status" value="1"/>
</dbReference>
<dbReference type="HAMAP" id="MF_00188">
    <property type="entry name" value="Pept_M48_protease_HtpX"/>
    <property type="match status" value="1"/>
</dbReference>
<dbReference type="InterPro" id="IPR050083">
    <property type="entry name" value="HtpX_protease"/>
</dbReference>
<dbReference type="InterPro" id="IPR022919">
    <property type="entry name" value="Pept_M48_protease_HtpX"/>
</dbReference>
<dbReference type="InterPro" id="IPR001915">
    <property type="entry name" value="Peptidase_M48"/>
</dbReference>
<dbReference type="NCBIfam" id="NF003965">
    <property type="entry name" value="PRK05457.1"/>
    <property type="match status" value="1"/>
</dbReference>
<dbReference type="PANTHER" id="PTHR43221">
    <property type="entry name" value="PROTEASE HTPX"/>
    <property type="match status" value="1"/>
</dbReference>
<dbReference type="PANTHER" id="PTHR43221:SF1">
    <property type="entry name" value="PROTEASE HTPX"/>
    <property type="match status" value="1"/>
</dbReference>
<dbReference type="Pfam" id="PF01435">
    <property type="entry name" value="Peptidase_M48"/>
    <property type="match status" value="1"/>
</dbReference>
<protein>
    <recommendedName>
        <fullName evidence="1">Protease HtpX</fullName>
        <ecNumber evidence="1">3.4.24.-</ecNumber>
    </recommendedName>
    <alternativeName>
        <fullName evidence="1">Heat shock protein HtpX</fullName>
    </alternativeName>
</protein>
<organism>
    <name type="scientific">Shewanella halifaxensis (strain HAW-EB4)</name>
    <dbReference type="NCBI Taxonomy" id="458817"/>
    <lineage>
        <taxon>Bacteria</taxon>
        <taxon>Pseudomonadati</taxon>
        <taxon>Pseudomonadota</taxon>
        <taxon>Gammaproteobacteria</taxon>
        <taxon>Alteromonadales</taxon>
        <taxon>Shewanellaceae</taxon>
        <taxon>Shewanella</taxon>
    </lineage>
</organism>
<sequence length="287" mass="30681">MKRIFLLIATNMAILLVASIVMSILGVNTSTMGGLLVFAAIFGFGGAFISLAISKWMAKKTMGCEVITTPRDNTERWLVETVARQAEQAGIKMPEVAIYQSPELNAFATGPSKNNALVAVSSGLLYGMSQDEIEAVLAHEVSHVANGDMVTLTLIQGVVNTFVIFAARVVAGIINNFVASNDEEGEGLGMFAYMAVVFVLDMLFGILASIIVAYFSRIREYRADEGAARLAGKEKMIAALDRLRQGPETGAMPASMSALGINGKKSMAELLMSHPPLEKRIAALRAS</sequence>
<name>HTPX_SHEHH</name>
<keyword id="KW-0997">Cell inner membrane</keyword>
<keyword id="KW-1003">Cell membrane</keyword>
<keyword id="KW-0378">Hydrolase</keyword>
<keyword id="KW-0472">Membrane</keyword>
<keyword id="KW-0479">Metal-binding</keyword>
<keyword id="KW-0482">Metalloprotease</keyword>
<keyword id="KW-0645">Protease</keyword>
<keyword id="KW-0812">Transmembrane</keyword>
<keyword id="KW-1133">Transmembrane helix</keyword>
<keyword id="KW-0862">Zinc</keyword>
<feature type="chain" id="PRO_1000077480" description="Protease HtpX">
    <location>
        <begin position="1"/>
        <end position="287"/>
    </location>
</feature>
<feature type="transmembrane region" description="Helical" evidence="1">
    <location>
        <begin position="4"/>
        <end position="24"/>
    </location>
</feature>
<feature type="transmembrane region" description="Helical" evidence="1">
    <location>
        <begin position="33"/>
        <end position="53"/>
    </location>
</feature>
<feature type="transmembrane region" description="Helical" evidence="1">
    <location>
        <begin position="154"/>
        <end position="174"/>
    </location>
</feature>
<feature type="transmembrane region" description="Helical" evidence="1">
    <location>
        <begin position="195"/>
        <end position="215"/>
    </location>
</feature>
<feature type="active site" evidence="1">
    <location>
        <position position="140"/>
    </location>
</feature>
<feature type="binding site" evidence="1">
    <location>
        <position position="139"/>
    </location>
    <ligand>
        <name>Zn(2+)</name>
        <dbReference type="ChEBI" id="CHEBI:29105"/>
        <note>catalytic</note>
    </ligand>
</feature>
<feature type="binding site" evidence="1">
    <location>
        <position position="143"/>
    </location>
    <ligand>
        <name>Zn(2+)</name>
        <dbReference type="ChEBI" id="CHEBI:29105"/>
        <note>catalytic</note>
    </ligand>
</feature>
<feature type="binding site" evidence="1">
    <location>
        <position position="220"/>
    </location>
    <ligand>
        <name>Zn(2+)</name>
        <dbReference type="ChEBI" id="CHEBI:29105"/>
        <note>catalytic</note>
    </ligand>
</feature>
<proteinExistence type="inferred from homology"/>
<reference key="1">
    <citation type="submission" date="2008-01" db="EMBL/GenBank/DDBJ databases">
        <title>Complete sequence of Shewanella halifaxensis HAW-EB4.</title>
        <authorList>
            <consortium name="US DOE Joint Genome Institute"/>
            <person name="Copeland A."/>
            <person name="Lucas S."/>
            <person name="Lapidus A."/>
            <person name="Glavina del Rio T."/>
            <person name="Dalin E."/>
            <person name="Tice H."/>
            <person name="Bruce D."/>
            <person name="Goodwin L."/>
            <person name="Pitluck S."/>
            <person name="Sims D."/>
            <person name="Brettin T."/>
            <person name="Detter J.C."/>
            <person name="Han C."/>
            <person name="Kuske C.R."/>
            <person name="Schmutz J."/>
            <person name="Larimer F."/>
            <person name="Land M."/>
            <person name="Hauser L."/>
            <person name="Kyrpides N."/>
            <person name="Kim E."/>
            <person name="Zhao J.-S."/>
            <person name="Richardson P."/>
        </authorList>
    </citation>
    <scope>NUCLEOTIDE SEQUENCE [LARGE SCALE GENOMIC DNA]</scope>
    <source>
        <strain>HAW-EB4</strain>
    </source>
</reference>
<evidence type="ECO:0000255" key="1">
    <source>
        <dbReference type="HAMAP-Rule" id="MF_00188"/>
    </source>
</evidence>
<accession>B0TJN4</accession>